<organism>
    <name type="scientific">Sulfolobus acidocaldarius (strain ATCC 33909 / DSM 639 / JCM 8929 / NBRC 15157 / NCIMB 11770)</name>
    <dbReference type="NCBI Taxonomy" id="330779"/>
    <lineage>
        <taxon>Archaea</taxon>
        <taxon>Thermoproteota</taxon>
        <taxon>Thermoprotei</taxon>
        <taxon>Sulfolobales</taxon>
        <taxon>Sulfolobaceae</taxon>
        <taxon>Sulfolobus</taxon>
    </lineage>
</organism>
<gene>
    <name evidence="1" type="primary">argG</name>
    <name type="ordered locus">Saci_1617</name>
</gene>
<dbReference type="EC" id="6.3.4.5" evidence="1"/>
<dbReference type="EMBL" id="CP000077">
    <property type="protein sequence ID" value="AAY80929.1"/>
    <property type="molecule type" value="Genomic_DNA"/>
</dbReference>
<dbReference type="RefSeq" id="WP_011278431.1">
    <property type="nucleotide sequence ID" value="NC_007181.1"/>
</dbReference>
<dbReference type="SMR" id="Q4J8F1"/>
<dbReference type="STRING" id="330779.Saci_1617"/>
<dbReference type="GeneID" id="14552110"/>
<dbReference type="KEGG" id="sai:Saci_1617"/>
<dbReference type="PATRIC" id="fig|330779.12.peg.1556"/>
<dbReference type="eggNOG" id="arCOG00112">
    <property type="taxonomic scope" value="Archaea"/>
</dbReference>
<dbReference type="HOGENOM" id="CLU_032784_4_2_2"/>
<dbReference type="UniPathway" id="UPA00068">
    <property type="reaction ID" value="UER00113"/>
</dbReference>
<dbReference type="Proteomes" id="UP000001018">
    <property type="component" value="Chromosome"/>
</dbReference>
<dbReference type="GO" id="GO:0005737">
    <property type="term" value="C:cytoplasm"/>
    <property type="evidence" value="ECO:0007669"/>
    <property type="project" value="UniProtKB-SubCell"/>
</dbReference>
<dbReference type="GO" id="GO:0004055">
    <property type="term" value="F:argininosuccinate synthase activity"/>
    <property type="evidence" value="ECO:0007669"/>
    <property type="project" value="UniProtKB-UniRule"/>
</dbReference>
<dbReference type="GO" id="GO:0005524">
    <property type="term" value="F:ATP binding"/>
    <property type="evidence" value="ECO:0007669"/>
    <property type="project" value="UniProtKB-UniRule"/>
</dbReference>
<dbReference type="GO" id="GO:0000053">
    <property type="term" value="P:argininosuccinate metabolic process"/>
    <property type="evidence" value="ECO:0007669"/>
    <property type="project" value="TreeGrafter"/>
</dbReference>
<dbReference type="GO" id="GO:0006526">
    <property type="term" value="P:L-arginine biosynthetic process"/>
    <property type="evidence" value="ECO:0007669"/>
    <property type="project" value="UniProtKB-UniRule"/>
</dbReference>
<dbReference type="GO" id="GO:0000050">
    <property type="term" value="P:urea cycle"/>
    <property type="evidence" value="ECO:0007669"/>
    <property type="project" value="TreeGrafter"/>
</dbReference>
<dbReference type="CDD" id="cd01999">
    <property type="entry name" value="ASS"/>
    <property type="match status" value="1"/>
</dbReference>
<dbReference type="FunFam" id="3.40.50.620:FF:000019">
    <property type="entry name" value="Argininosuccinate synthase"/>
    <property type="match status" value="1"/>
</dbReference>
<dbReference type="FunFam" id="3.90.1260.10:FF:000007">
    <property type="entry name" value="Argininosuccinate synthase"/>
    <property type="match status" value="1"/>
</dbReference>
<dbReference type="Gene3D" id="3.90.1260.10">
    <property type="entry name" value="Argininosuccinate synthetase, chain A, domain 2"/>
    <property type="match status" value="1"/>
</dbReference>
<dbReference type="Gene3D" id="3.40.50.620">
    <property type="entry name" value="HUPs"/>
    <property type="match status" value="1"/>
</dbReference>
<dbReference type="HAMAP" id="MF_00005">
    <property type="entry name" value="Arg_succ_synth_type1"/>
    <property type="match status" value="1"/>
</dbReference>
<dbReference type="InterPro" id="IPR048268">
    <property type="entry name" value="Arginosuc_syn_C"/>
</dbReference>
<dbReference type="InterPro" id="IPR048267">
    <property type="entry name" value="Arginosuc_syn_N"/>
</dbReference>
<dbReference type="InterPro" id="IPR001518">
    <property type="entry name" value="Arginosuc_synth"/>
</dbReference>
<dbReference type="InterPro" id="IPR018223">
    <property type="entry name" value="Arginosuc_synth_CS"/>
</dbReference>
<dbReference type="InterPro" id="IPR023434">
    <property type="entry name" value="Arginosuc_synth_type_1_subfam"/>
</dbReference>
<dbReference type="InterPro" id="IPR024074">
    <property type="entry name" value="AS_cat/multimer_dom_body"/>
</dbReference>
<dbReference type="InterPro" id="IPR014729">
    <property type="entry name" value="Rossmann-like_a/b/a_fold"/>
</dbReference>
<dbReference type="NCBIfam" id="TIGR00032">
    <property type="entry name" value="argG"/>
    <property type="match status" value="1"/>
</dbReference>
<dbReference type="NCBIfam" id="NF001770">
    <property type="entry name" value="PRK00509.1"/>
    <property type="match status" value="1"/>
</dbReference>
<dbReference type="PANTHER" id="PTHR11587">
    <property type="entry name" value="ARGININOSUCCINATE SYNTHASE"/>
    <property type="match status" value="1"/>
</dbReference>
<dbReference type="PANTHER" id="PTHR11587:SF2">
    <property type="entry name" value="ARGININOSUCCINATE SYNTHASE"/>
    <property type="match status" value="1"/>
</dbReference>
<dbReference type="Pfam" id="PF20979">
    <property type="entry name" value="Arginosuc_syn_C"/>
    <property type="match status" value="1"/>
</dbReference>
<dbReference type="Pfam" id="PF00764">
    <property type="entry name" value="Arginosuc_synth"/>
    <property type="match status" value="1"/>
</dbReference>
<dbReference type="SUPFAM" id="SSF52402">
    <property type="entry name" value="Adenine nucleotide alpha hydrolases-like"/>
    <property type="match status" value="1"/>
</dbReference>
<dbReference type="SUPFAM" id="SSF69864">
    <property type="entry name" value="Argininosuccinate synthetase, C-terminal domain"/>
    <property type="match status" value="1"/>
</dbReference>
<dbReference type="PROSITE" id="PS00564">
    <property type="entry name" value="ARGININOSUCCIN_SYN_1"/>
    <property type="match status" value="1"/>
</dbReference>
<dbReference type="PROSITE" id="PS00565">
    <property type="entry name" value="ARGININOSUCCIN_SYN_2"/>
    <property type="match status" value="1"/>
</dbReference>
<protein>
    <recommendedName>
        <fullName evidence="1">Argininosuccinate synthase</fullName>
        <ecNumber evidence="1">6.3.4.5</ecNumber>
    </recommendedName>
    <alternativeName>
        <fullName evidence="1">Citrulline--aspartate ligase</fullName>
    </alternativeName>
</protein>
<accession>Q4J8F1</accession>
<sequence>MKIVLAYSGGLDTTVAIRWLRETFNADVTTVTVDVGQKDDFYQIEKRAYIAGAIKHYTIDAKKDFAERYISYAIKMNGLYEDIYPLSTALARPLIVEKVVEIAKKIGAEAIAHGSTSKGNDQVRFDLAVKALYPEAKIIAPARIWNMTRDKEIEYAKSKGIPIKTESSKYSIDENLWGRSIEGDIISDPSKEVPEDAFEWTKKTKDDKLKISLTFDKGLPVEVNGEKMDLLKVIQVLNELVGSRGFGRVEHLENRVVGFKSREVYEVPAALVLINSHKDLEKSTYTPLEFRFKRSLDGQWSDLVYQGLWFEPLRETIQIAGDNLNKWISGEVFIEVENGNMKILGRKGKFSPFSEEIASYNKGWYPSDEMARGFIEIFGMHSLVARKSRGI</sequence>
<keyword id="KW-0028">Amino-acid biosynthesis</keyword>
<keyword id="KW-0055">Arginine biosynthesis</keyword>
<keyword id="KW-0067">ATP-binding</keyword>
<keyword id="KW-0963">Cytoplasm</keyword>
<keyword id="KW-0436">Ligase</keyword>
<keyword id="KW-0547">Nucleotide-binding</keyword>
<keyword id="KW-1185">Reference proteome</keyword>
<comment type="catalytic activity">
    <reaction evidence="1">
        <text>L-citrulline + L-aspartate + ATP = 2-(N(omega)-L-arginino)succinate + AMP + diphosphate + H(+)</text>
        <dbReference type="Rhea" id="RHEA:10932"/>
        <dbReference type="ChEBI" id="CHEBI:15378"/>
        <dbReference type="ChEBI" id="CHEBI:29991"/>
        <dbReference type="ChEBI" id="CHEBI:30616"/>
        <dbReference type="ChEBI" id="CHEBI:33019"/>
        <dbReference type="ChEBI" id="CHEBI:57472"/>
        <dbReference type="ChEBI" id="CHEBI:57743"/>
        <dbReference type="ChEBI" id="CHEBI:456215"/>
        <dbReference type="EC" id="6.3.4.5"/>
    </reaction>
</comment>
<comment type="pathway">
    <text evidence="1">Amino-acid biosynthesis; L-arginine biosynthesis; L-arginine from L-ornithine and carbamoyl phosphate: step 2/3.</text>
</comment>
<comment type="subunit">
    <text evidence="1">Homotetramer.</text>
</comment>
<comment type="subcellular location">
    <subcellularLocation>
        <location evidence="1">Cytoplasm</location>
    </subcellularLocation>
</comment>
<comment type="similarity">
    <text evidence="1">Belongs to the argininosuccinate synthase family. Type 1 subfamily.</text>
</comment>
<evidence type="ECO:0000255" key="1">
    <source>
        <dbReference type="HAMAP-Rule" id="MF_00005"/>
    </source>
</evidence>
<reference key="1">
    <citation type="journal article" date="2005" name="J. Bacteriol.">
        <title>The genome of Sulfolobus acidocaldarius, a model organism of the Crenarchaeota.</title>
        <authorList>
            <person name="Chen L."/>
            <person name="Bruegger K."/>
            <person name="Skovgaard M."/>
            <person name="Redder P."/>
            <person name="She Q."/>
            <person name="Torarinsson E."/>
            <person name="Greve B."/>
            <person name="Awayez M."/>
            <person name="Zibat A."/>
            <person name="Klenk H.-P."/>
            <person name="Garrett R.A."/>
        </authorList>
    </citation>
    <scope>NUCLEOTIDE SEQUENCE [LARGE SCALE GENOMIC DNA]</scope>
    <source>
        <strain>ATCC 33909 / DSM 639 / JCM 8929 / NBRC 15157 / NCIMB 11770</strain>
    </source>
</reference>
<feature type="chain" id="PRO_0000148685" description="Argininosuccinate synthase">
    <location>
        <begin position="1"/>
        <end position="391"/>
    </location>
</feature>
<feature type="binding site" evidence="1">
    <location>
        <begin position="6"/>
        <end position="14"/>
    </location>
    <ligand>
        <name>ATP</name>
        <dbReference type="ChEBI" id="CHEBI:30616"/>
    </ligand>
</feature>
<feature type="binding site" evidence="1">
    <location>
        <position position="84"/>
    </location>
    <ligand>
        <name>L-citrulline</name>
        <dbReference type="ChEBI" id="CHEBI:57743"/>
    </ligand>
</feature>
<feature type="binding site" evidence="1">
    <location>
        <position position="114"/>
    </location>
    <ligand>
        <name>ATP</name>
        <dbReference type="ChEBI" id="CHEBI:30616"/>
    </ligand>
</feature>
<feature type="binding site" evidence="1">
    <location>
        <position position="116"/>
    </location>
    <ligand>
        <name>L-aspartate</name>
        <dbReference type="ChEBI" id="CHEBI:29991"/>
    </ligand>
</feature>
<feature type="binding site" evidence="1">
    <location>
        <position position="120"/>
    </location>
    <ligand>
        <name>L-aspartate</name>
        <dbReference type="ChEBI" id="CHEBI:29991"/>
    </ligand>
</feature>
<feature type="binding site" evidence="1">
    <location>
        <position position="120"/>
    </location>
    <ligand>
        <name>L-citrulline</name>
        <dbReference type="ChEBI" id="CHEBI:57743"/>
    </ligand>
</feature>
<feature type="binding site" evidence="1">
    <location>
        <position position="121"/>
    </location>
    <ligand>
        <name>L-aspartate</name>
        <dbReference type="ChEBI" id="CHEBI:29991"/>
    </ligand>
</feature>
<feature type="binding site" evidence="1">
    <location>
        <position position="124"/>
    </location>
    <ligand>
        <name>L-citrulline</name>
        <dbReference type="ChEBI" id="CHEBI:57743"/>
    </ligand>
</feature>
<feature type="binding site" evidence="1">
    <location>
        <position position="171"/>
    </location>
    <ligand>
        <name>L-citrulline</name>
        <dbReference type="ChEBI" id="CHEBI:57743"/>
    </ligand>
</feature>
<feature type="binding site" evidence="1">
    <location>
        <position position="180"/>
    </location>
    <ligand>
        <name>L-citrulline</name>
        <dbReference type="ChEBI" id="CHEBI:57743"/>
    </ligand>
</feature>
<feature type="binding site" evidence="1">
    <location>
        <position position="253"/>
    </location>
    <ligand>
        <name>L-citrulline</name>
        <dbReference type="ChEBI" id="CHEBI:57743"/>
    </ligand>
</feature>
<feature type="binding site" evidence="1">
    <location>
        <position position="265"/>
    </location>
    <ligand>
        <name>L-citrulline</name>
        <dbReference type="ChEBI" id="CHEBI:57743"/>
    </ligand>
</feature>
<name>ASSY_SULAC</name>
<proteinExistence type="inferred from homology"/>